<feature type="initiator methionine" description="Removed" evidence="17">
    <location>
        <position position="1"/>
    </location>
</feature>
<feature type="chain" id="PRO_0000171209" description="Serine/threonine-protein kinase PknD">
    <location>
        <begin position="2"/>
        <end position="664"/>
    </location>
</feature>
<feature type="topological domain" description="Cytoplasmic" evidence="2">
    <location>
        <begin position="2"/>
        <end position="381"/>
    </location>
</feature>
<feature type="transmembrane region" description="Helical" evidence="2">
    <location>
        <begin position="382"/>
        <end position="402"/>
    </location>
</feature>
<feature type="topological domain" description="Extracellular" evidence="2">
    <location>
        <begin position="403"/>
        <end position="664"/>
    </location>
</feature>
<feature type="domain" description="Protein kinase" evidence="3">
    <location>
        <begin position="15"/>
        <end position="276"/>
    </location>
</feature>
<feature type="repeat" description="NHL 1">
    <location>
        <begin position="414"/>
        <end position="456"/>
    </location>
</feature>
<feature type="repeat" description="NHL 2">
    <location>
        <begin position="457"/>
        <end position="497"/>
    </location>
</feature>
<feature type="repeat" description="NHL 3">
    <location>
        <begin position="498"/>
        <end position="539"/>
    </location>
</feature>
<feature type="repeat" description="NHL 4">
    <location>
        <begin position="540"/>
        <end position="581"/>
    </location>
</feature>
<feature type="repeat" description="NHL 5">
    <location>
        <begin position="582"/>
        <end position="623"/>
    </location>
</feature>
<feature type="repeat" description="NHL 6">
    <location>
        <begin position="624"/>
        <end position="664"/>
    </location>
</feature>
<feature type="region of interest" description="Disordered" evidence="5">
    <location>
        <begin position="303"/>
        <end position="333"/>
    </location>
</feature>
<feature type="active site" description="Proton acceptor" evidence="3 4">
    <location>
        <position position="138"/>
    </location>
</feature>
<feature type="binding site" evidence="3">
    <location>
        <begin position="21"/>
        <end position="29"/>
    </location>
    <ligand>
        <name>ATP</name>
        <dbReference type="ChEBI" id="CHEBI:30616"/>
    </ligand>
</feature>
<feature type="binding site" evidence="3">
    <location>
        <position position="44"/>
    </location>
    <ligand>
        <name>ATP</name>
        <dbReference type="ChEBI" id="CHEBI:30616"/>
    </ligand>
</feature>
<feature type="modified residue" description="N-acetylserine" evidence="17">
    <location>
        <position position="2"/>
    </location>
</feature>
<feature type="modified residue" description="Phosphothreonine; by autocatalysis" evidence="6">
    <location>
        <position position="135"/>
    </location>
</feature>
<feature type="modified residue" description="Phosphothreonine; by autocatalysis" evidence="6">
    <location>
        <position position="169"/>
    </location>
</feature>
<feature type="modified residue" description="Phosphothreonine; by autocatalysis" evidence="6">
    <location>
        <position position="171"/>
    </location>
</feature>
<feature type="modified residue" description="Phosphothreonine; by autocatalysis" evidence="6">
    <location>
        <position position="173"/>
    </location>
</feature>
<feature type="modified residue" description="Phosphothreonine; by autocatalysis" evidence="6">
    <location>
        <position position="209"/>
    </location>
</feature>
<feature type="mutagenesis site" description="Lack of activity." evidence="9">
    <original>H</original>
    <variation>A</variation>
    <location>
        <position position="79"/>
    </location>
</feature>
<feature type="mutagenesis site" description="Decreases activity and alters substrate specificity." evidence="9">
    <original>Y</original>
    <variation>A</variation>
    <location>
        <position position="81"/>
    </location>
</feature>
<feature type="mutagenesis site" description="2600-fold decrease in activity." evidence="10">
    <original>D</original>
    <variation>N</variation>
    <location>
        <position position="138"/>
    </location>
</feature>
<feature type="strand" evidence="18">
    <location>
        <begin position="428"/>
        <end position="433"/>
    </location>
</feature>
<feature type="strand" evidence="18">
    <location>
        <begin position="439"/>
        <end position="443"/>
    </location>
</feature>
<feature type="strand" evidence="18">
    <location>
        <begin position="445"/>
        <end position="447"/>
    </location>
</feature>
<feature type="strand" evidence="18">
    <location>
        <begin position="449"/>
        <end position="453"/>
    </location>
</feature>
<feature type="strand" evidence="19">
    <location>
        <begin position="460"/>
        <end position="462"/>
    </location>
</feature>
<feature type="strand" evidence="18">
    <location>
        <begin position="474"/>
        <end position="476"/>
    </location>
</feature>
<feature type="strand" evidence="18">
    <location>
        <begin position="482"/>
        <end position="486"/>
    </location>
</feature>
<feature type="turn" evidence="18">
    <location>
        <begin position="487"/>
        <end position="489"/>
    </location>
</feature>
<feature type="strand" evidence="18">
    <location>
        <begin position="490"/>
        <end position="494"/>
    </location>
</feature>
<feature type="strand" evidence="18">
    <location>
        <begin position="510"/>
        <end position="517"/>
    </location>
</feature>
<feature type="strand" evidence="18">
    <location>
        <begin position="523"/>
        <end position="527"/>
    </location>
</feature>
<feature type="helix" evidence="18">
    <location>
        <begin position="528"/>
        <end position="530"/>
    </location>
</feature>
<feature type="strand" evidence="18">
    <location>
        <begin position="532"/>
        <end position="536"/>
    </location>
</feature>
<feature type="strand" evidence="18">
    <location>
        <begin position="557"/>
        <end position="559"/>
    </location>
</feature>
<feature type="strand" evidence="18">
    <location>
        <begin position="565"/>
        <end position="569"/>
    </location>
</feature>
<feature type="helix" evidence="18">
    <location>
        <begin position="570"/>
        <end position="572"/>
    </location>
</feature>
<feature type="strand" evidence="18">
    <location>
        <begin position="574"/>
        <end position="578"/>
    </location>
</feature>
<feature type="turn" evidence="18">
    <location>
        <begin position="580"/>
        <end position="582"/>
    </location>
</feature>
<feature type="strand" evidence="18">
    <location>
        <begin position="585"/>
        <end position="587"/>
    </location>
</feature>
<feature type="strand" evidence="18">
    <location>
        <begin position="595"/>
        <end position="601"/>
    </location>
</feature>
<feature type="strand" evidence="18">
    <location>
        <begin position="607"/>
        <end position="611"/>
    </location>
</feature>
<feature type="turn" evidence="18">
    <location>
        <begin position="612"/>
        <end position="614"/>
    </location>
</feature>
<feature type="strand" evidence="18">
    <location>
        <begin position="617"/>
        <end position="620"/>
    </location>
</feature>
<feature type="strand" evidence="18">
    <location>
        <begin position="638"/>
        <end position="643"/>
    </location>
</feature>
<feature type="strand" evidence="18">
    <location>
        <begin position="649"/>
        <end position="653"/>
    </location>
</feature>
<feature type="helix" evidence="18">
    <location>
        <begin position="654"/>
        <end position="656"/>
    </location>
</feature>
<feature type="strand" evidence="18">
    <location>
        <begin position="658"/>
        <end position="662"/>
    </location>
</feature>
<evidence type="ECO:0000250" key="1">
    <source>
        <dbReference type="UniProtKB" id="P9WI78"/>
    </source>
</evidence>
<evidence type="ECO:0000255" key="2"/>
<evidence type="ECO:0000255" key="3">
    <source>
        <dbReference type="PROSITE-ProRule" id="PRU00159"/>
    </source>
</evidence>
<evidence type="ECO:0000255" key="4">
    <source>
        <dbReference type="PROSITE-ProRule" id="PRU10027"/>
    </source>
</evidence>
<evidence type="ECO:0000256" key="5">
    <source>
        <dbReference type="SAM" id="MobiDB-lite"/>
    </source>
</evidence>
<evidence type="ECO:0000269" key="6">
    <source>
    </source>
</evidence>
<evidence type="ECO:0000269" key="7">
    <source>
    </source>
</evidence>
<evidence type="ECO:0000269" key="8">
    <source>
    </source>
</evidence>
<evidence type="ECO:0000269" key="9">
    <source>
    </source>
</evidence>
<evidence type="ECO:0000269" key="10">
    <source>
    </source>
</evidence>
<evidence type="ECO:0000269" key="11">
    <source>
    </source>
</evidence>
<evidence type="ECO:0000269" key="12">
    <source>
    </source>
</evidence>
<evidence type="ECO:0000269" key="13">
    <source>
    </source>
</evidence>
<evidence type="ECO:0000305" key="14"/>
<evidence type="ECO:0007744" key="15">
    <source>
        <dbReference type="PDB" id="1RWI"/>
    </source>
</evidence>
<evidence type="ECO:0007744" key="16">
    <source>
        <dbReference type="PDB" id="1RWL"/>
    </source>
</evidence>
<evidence type="ECO:0007744" key="17">
    <source>
    </source>
</evidence>
<evidence type="ECO:0007829" key="18">
    <source>
        <dbReference type="PDB" id="1RWI"/>
    </source>
</evidence>
<evidence type="ECO:0007829" key="19">
    <source>
        <dbReference type="PDB" id="1RWL"/>
    </source>
</evidence>
<proteinExistence type="evidence at protein level"/>
<accession>P9WI79</accession>
<accession>L0T6U6</accession>
<accession>O05871</accession>
<accession>P95308</accession>
<comment type="function">
    <text evidence="7 9 10 12 13">Part of a signaling pathway that enables adaptation to osmotic stress through cell wall remodeling and virulence factor production (PubMed:24309377). Phosphorylates the osmosensory protein OprA, which inhibits binding of OprA to Rv2638, leading to the regulation of osmotically regulated genes, including the ESX-1-associated virulence factor espA (PubMed:17242402, PubMed:17411339, PubMed:24309377). In addition, directly phosphorylates the alternative sigma factor SigF and its regulator, Rv1364c, which regulates the SigF-Rv1364c interaction (PubMed:30642988). Can also phosphorylate the FHA domain of Rv1747 (PubMed:15987910).</text>
</comment>
<comment type="function">
    <text evidence="1">Key microbial factor required for central nervous system tuberculosis. Required for invasion of host brain endothelia, but not macrophages, lung epithelia or other endothelia.</text>
</comment>
<comment type="catalytic activity">
    <reaction evidence="9 10 13">
        <text>L-seryl-[protein] + ATP = O-phospho-L-seryl-[protein] + ADP + H(+)</text>
        <dbReference type="Rhea" id="RHEA:17989"/>
        <dbReference type="Rhea" id="RHEA-COMP:9863"/>
        <dbReference type="Rhea" id="RHEA-COMP:11604"/>
        <dbReference type="ChEBI" id="CHEBI:15378"/>
        <dbReference type="ChEBI" id="CHEBI:29999"/>
        <dbReference type="ChEBI" id="CHEBI:30616"/>
        <dbReference type="ChEBI" id="CHEBI:83421"/>
        <dbReference type="ChEBI" id="CHEBI:456216"/>
        <dbReference type="EC" id="2.7.11.1"/>
    </reaction>
</comment>
<comment type="catalytic activity">
    <reaction evidence="9 10 12 13">
        <text>L-threonyl-[protein] + ATP = O-phospho-L-threonyl-[protein] + ADP + H(+)</text>
        <dbReference type="Rhea" id="RHEA:46608"/>
        <dbReference type="Rhea" id="RHEA-COMP:11060"/>
        <dbReference type="Rhea" id="RHEA-COMP:11605"/>
        <dbReference type="ChEBI" id="CHEBI:15378"/>
        <dbReference type="ChEBI" id="CHEBI:30013"/>
        <dbReference type="ChEBI" id="CHEBI:30616"/>
        <dbReference type="ChEBI" id="CHEBI:61977"/>
        <dbReference type="ChEBI" id="CHEBI:456216"/>
        <dbReference type="EC" id="2.7.11.1"/>
    </reaction>
</comment>
<comment type="activity regulation">
    <text evidence="9">Dimerization activates the kinase domain of unphosphorylated PknD via an allosteric mechanism, triggering autophosphorylation and phosphorylation of target proteins. Phosphorylated PknD is fully active even in the absence of dimerization.</text>
</comment>
<comment type="subunit">
    <text evidence="9">Homodimer.</text>
</comment>
<comment type="subcellular location">
    <subcellularLocation>
        <location evidence="14">Cell membrane</location>
        <topology evidence="14">Single-pass membrane protein</topology>
    </subcellularLocation>
</comment>
<comment type="induction">
    <text evidence="11">Increased expression after 3 hours of phosphate starvation, no protein detected after 24 hours phosphate starvation (at protein level). Part of the pstS2-pknD operon.</text>
</comment>
<comment type="PTM">
    <text evidence="6 8 9">Autophosphorylated (PubMed:15967413, PubMed:16739134, PubMed:17242402). Dephosphorylated by PstP (PubMed:15967413).</text>
</comment>
<comment type="disruption phenotype">
    <text evidence="11">No growth phenotype in phosphate-rich medium (3.6 mM Pi), in restricted medium (Sauton) grows better than wild-type but in phosphate-free Sauton medium dies faster than wild-type when pre-exposed to starvation.</text>
</comment>
<comment type="similarity">
    <text evidence="3">Belongs to the protein kinase superfamily. Ser/Thr protein kinase family.</text>
</comment>
<sequence>MSDAVPQVGSQFGPYQLLRLLGRGGMGEVYEAEDTRKHRVVALKLISPQYSDNAVFRARMQREADTAGRLTEPHIVPIHDYGEINGQFFVEMRMIDGTSLRALLKQYGPLTPARAVAIVRQIAAALDAAHANGVTHRDVKPENILVTASDFAYLVDFGIARAASDPGLTQTGTAVGTYNYMAPERFTGDEVTYRADIYALACVLGECLTGAPPYRADSVERLIAAHLMDPAPQPSQLRPGRVPPALDQVIAKGMAKNPAERFMSAGDLAIAAHDALTTSEQHQATTILRRGDNATLLATPADTGLSQSESGIAGAGTGPPTPGAARWSPGDSATVAGPLAADSRGGNWPSQTGHSPAVPNALQASLGHAVPPAGNKRKVWAVVGAAAIVLVAIVAAAGYLVLRPSWSPTQASGQTVLPFTGIDFRLSPSGVAVDSAGNVYVTSEGMYGRVVKLATGSTGTTVLPFNGLYQPQGLAVDGAGTVYVTDFNNRVVTLAAGSNNQTVLPFDGLNYPEGLAVDTQGAVYVADRGNNRVVKLAAGSKTQTVLPFTGLNDPDGVAVDNSGNVYVTDTDNNRVVKLEAESNNQVVLPFTDITAPWGIAVDEAGTVYVTEHNTNQVVKLLAGSTTSTVLPFTGLNTPLAVAVDSDRTVYVADRGNDRVVKLTS</sequence>
<gene>
    <name type="primary">pknD</name>
    <name type="ordered locus">Rv0931c</name>
    <name type="ORF">MTCY08C9.08</name>
</gene>
<dbReference type="EC" id="2.7.11.1" evidence="9 10 12 13"/>
<dbReference type="EMBL" id="X99618">
    <property type="protein sequence ID" value="CAA67929.2"/>
    <property type="molecule type" value="Genomic_DNA"/>
</dbReference>
<dbReference type="EMBL" id="AL123456">
    <property type="protein sequence ID" value="CCP43679.1"/>
    <property type="molecule type" value="Genomic_DNA"/>
</dbReference>
<dbReference type="PIR" id="C70584">
    <property type="entry name" value="C70584"/>
</dbReference>
<dbReference type="RefSeq" id="NP_215446.1">
    <property type="nucleotide sequence ID" value="NC_000962.3"/>
</dbReference>
<dbReference type="RefSeq" id="WP_003404782.1">
    <property type="nucleotide sequence ID" value="NZ_NVQJ01000001.1"/>
</dbReference>
<dbReference type="PDB" id="1RWI">
    <property type="method" value="X-ray"/>
    <property type="resolution" value="1.80 A"/>
    <property type="chains" value="A/B=403-664"/>
</dbReference>
<dbReference type="PDB" id="1RWL">
    <property type="method" value="X-ray"/>
    <property type="resolution" value="1.90 A"/>
    <property type="chains" value="A=403-664"/>
</dbReference>
<dbReference type="PDB" id="8PKQ">
    <property type="method" value="X-ray"/>
    <property type="resolution" value="1.70 A"/>
    <property type="chains" value="A/B/C=498-579"/>
</dbReference>
<dbReference type="PDB" id="8PKR">
    <property type="method" value="X-ray"/>
    <property type="resolution" value="0.95 A"/>
    <property type="chains" value="A/B=498-621"/>
</dbReference>
<dbReference type="PDBsum" id="1RWI"/>
<dbReference type="PDBsum" id="1RWL"/>
<dbReference type="PDBsum" id="8PKQ"/>
<dbReference type="PDBsum" id="8PKR"/>
<dbReference type="SMR" id="P9WI79"/>
<dbReference type="FunCoup" id="P9WI79">
    <property type="interactions" value="76"/>
</dbReference>
<dbReference type="IntAct" id="P9WI79">
    <property type="interactions" value="2"/>
</dbReference>
<dbReference type="STRING" id="83332.Rv0931c"/>
<dbReference type="iPTMnet" id="P9WI79"/>
<dbReference type="PaxDb" id="83332-Rv0931c"/>
<dbReference type="DNASU" id="885607"/>
<dbReference type="GeneID" id="45424897"/>
<dbReference type="GeneID" id="885607"/>
<dbReference type="KEGG" id="mtu:Rv0931c"/>
<dbReference type="KEGG" id="mtv:RVBD_0931c"/>
<dbReference type="TubercuList" id="Rv0931c"/>
<dbReference type="eggNOG" id="COG0515">
    <property type="taxonomic scope" value="Bacteria"/>
</dbReference>
<dbReference type="eggNOG" id="COG3391">
    <property type="taxonomic scope" value="Bacteria"/>
</dbReference>
<dbReference type="InParanoid" id="P9WI79"/>
<dbReference type="OrthoDB" id="9762169at2"/>
<dbReference type="BRENDA" id="2.7.11.1">
    <property type="organism ID" value="3445"/>
</dbReference>
<dbReference type="EvolutionaryTrace" id="P9WI79"/>
<dbReference type="Proteomes" id="UP000001584">
    <property type="component" value="Chromosome"/>
</dbReference>
<dbReference type="GO" id="GO:0005829">
    <property type="term" value="C:cytosol"/>
    <property type="evidence" value="ECO:0007005"/>
    <property type="project" value="MTBBASE"/>
</dbReference>
<dbReference type="GO" id="GO:0005576">
    <property type="term" value="C:extracellular region"/>
    <property type="evidence" value="ECO:0007005"/>
    <property type="project" value="MTBBASE"/>
</dbReference>
<dbReference type="GO" id="GO:0009274">
    <property type="term" value="C:peptidoglycan-based cell wall"/>
    <property type="evidence" value="ECO:0007005"/>
    <property type="project" value="MTBBASE"/>
</dbReference>
<dbReference type="GO" id="GO:0005886">
    <property type="term" value="C:plasma membrane"/>
    <property type="evidence" value="ECO:0007005"/>
    <property type="project" value="MTBBASE"/>
</dbReference>
<dbReference type="GO" id="GO:0005524">
    <property type="term" value="F:ATP binding"/>
    <property type="evidence" value="ECO:0007669"/>
    <property type="project" value="UniProtKB-KW"/>
</dbReference>
<dbReference type="GO" id="GO:0030145">
    <property type="term" value="F:manganese ion binding"/>
    <property type="evidence" value="ECO:0000314"/>
    <property type="project" value="MTBBASE"/>
</dbReference>
<dbReference type="GO" id="GO:0004672">
    <property type="term" value="F:protein kinase activity"/>
    <property type="evidence" value="ECO:0000314"/>
    <property type="project" value="MTBBASE"/>
</dbReference>
<dbReference type="GO" id="GO:0106310">
    <property type="term" value="F:protein serine kinase activity"/>
    <property type="evidence" value="ECO:0007669"/>
    <property type="project" value="RHEA"/>
</dbReference>
<dbReference type="GO" id="GO:0004674">
    <property type="term" value="F:protein serine/threonine kinase activity"/>
    <property type="evidence" value="ECO:0000314"/>
    <property type="project" value="MTBBASE"/>
</dbReference>
<dbReference type="GO" id="GO:0016036">
    <property type="term" value="P:cellular response to phosphate starvation"/>
    <property type="evidence" value="ECO:0000314"/>
    <property type="project" value="MTBBASE"/>
</dbReference>
<dbReference type="GO" id="GO:0045717">
    <property type="term" value="P:negative regulation of fatty acid biosynthetic process"/>
    <property type="evidence" value="ECO:0000314"/>
    <property type="project" value="MTBBASE"/>
</dbReference>
<dbReference type="CDD" id="cd14952">
    <property type="entry name" value="NHL_PKND_like"/>
    <property type="match status" value="1"/>
</dbReference>
<dbReference type="CDD" id="cd14014">
    <property type="entry name" value="STKc_PknB_like"/>
    <property type="match status" value="1"/>
</dbReference>
<dbReference type="FunFam" id="1.10.510.10:FF:000021">
    <property type="entry name" value="Serine/threonine protein kinase"/>
    <property type="match status" value="1"/>
</dbReference>
<dbReference type="FunFam" id="3.30.200.20:FF:000348">
    <property type="entry name" value="Serine/threonine protein kinase"/>
    <property type="match status" value="1"/>
</dbReference>
<dbReference type="Gene3D" id="3.30.200.20">
    <property type="entry name" value="Phosphorylase Kinase, domain 1"/>
    <property type="match status" value="1"/>
</dbReference>
<dbReference type="Gene3D" id="2.120.10.30">
    <property type="entry name" value="TolB, C-terminal domain"/>
    <property type="match status" value="1"/>
</dbReference>
<dbReference type="Gene3D" id="1.10.510.10">
    <property type="entry name" value="Transferase(Phosphotransferase) domain 1"/>
    <property type="match status" value="1"/>
</dbReference>
<dbReference type="InterPro" id="IPR011042">
    <property type="entry name" value="6-blade_b-propeller_TolB-like"/>
</dbReference>
<dbReference type="InterPro" id="IPR011009">
    <property type="entry name" value="Kinase-like_dom_sf"/>
</dbReference>
<dbReference type="InterPro" id="IPR035016">
    <property type="entry name" value="NHL_PKND"/>
</dbReference>
<dbReference type="InterPro" id="IPR001258">
    <property type="entry name" value="NHL_repeat"/>
</dbReference>
<dbReference type="InterPro" id="IPR000719">
    <property type="entry name" value="Prot_kinase_dom"/>
</dbReference>
<dbReference type="InterPro" id="IPR017441">
    <property type="entry name" value="Protein_kinase_ATP_BS"/>
</dbReference>
<dbReference type="InterPro" id="IPR008271">
    <property type="entry name" value="Ser/Thr_kinase_AS"/>
</dbReference>
<dbReference type="PANTHER" id="PTHR43289">
    <property type="entry name" value="MITOGEN-ACTIVATED PROTEIN KINASE KINASE KINASE 20-RELATED"/>
    <property type="match status" value="1"/>
</dbReference>
<dbReference type="PANTHER" id="PTHR43289:SF6">
    <property type="entry name" value="SERINE_THREONINE-PROTEIN KINASE NEKL-3"/>
    <property type="match status" value="1"/>
</dbReference>
<dbReference type="Pfam" id="PF01436">
    <property type="entry name" value="NHL"/>
    <property type="match status" value="5"/>
</dbReference>
<dbReference type="Pfam" id="PF00069">
    <property type="entry name" value="Pkinase"/>
    <property type="match status" value="1"/>
</dbReference>
<dbReference type="SMART" id="SM00220">
    <property type="entry name" value="S_TKc"/>
    <property type="match status" value="1"/>
</dbReference>
<dbReference type="SUPFAM" id="SSF101898">
    <property type="entry name" value="NHL repeat"/>
    <property type="match status" value="1"/>
</dbReference>
<dbReference type="SUPFAM" id="SSF56112">
    <property type="entry name" value="Protein kinase-like (PK-like)"/>
    <property type="match status" value="1"/>
</dbReference>
<dbReference type="PROSITE" id="PS51125">
    <property type="entry name" value="NHL"/>
    <property type="match status" value="6"/>
</dbReference>
<dbReference type="PROSITE" id="PS00107">
    <property type="entry name" value="PROTEIN_KINASE_ATP"/>
    <property type="match status" value="1"/>
</dbReference>
<dbReference type="PROSITE" id="PS50011">
    <property type="entry name" value="PROTEIN_KINASE_DOM"/>
    <property type="match status" value="1"/>
</dbReference>
<dbReference type="PROSITE" id="PS00108">
    <property type="entry name" value="PROTEIN_KINASE_ST"/>
    <property type="match status" value="1"/>
</dbReference>
<name>PKND_MYCTU</name>
<reference key="1">
    <citation type="journal article" date="1997" name="Eur. J. Biochem.">
        <title>A serine/threonine protein kinase from Mycobacterium tuberculosis.</title>
        <authorList>
            <person name="Peirs P."/>
            <person name="De Wit L."/>
            <person name="Braibant M."/>
            <person name="Huygen K."/>
            <person name="Content J."/>
        </authorList>
    </citation>
    <scope>NUCLEOTIDE SEQUENCE [GENOMIC DNA]</scope>
    <source>
        <strain>ATCC 35801 / TMC 107 / Erdman</strain>
    </source>
</reference>
<reference key="2">
    <citation type="submission" date="1999-10" db="EMBL/GenBank/DDBJ databases">
        <authorList>
            <person name="Content J."/>
        </authorList>
    </citation>
    <scope>SEQUENCE REVISION</scope>
    <source>
        <strain>ATCC 35801 / TMC 107 / Erdman</strain>
    </source>
</reference>
<reference key="3">
    <citation type="journal article" date="1998" name="Nature">
        <title>Deciphering the biology of Mycobacterium tuberculosis from the complete genome sequence.</title>
        <authorList>
            <person name="Cole S.T."/>
            <person name="Brosch R."/>
            <person name="Parkhill J."/>
            <person name="Garnier T."/>
            <person name="Churcher C.M."/>
            <person name="Harris D.E."/>
            <person name="Gordon S.V."/>
            <person name="Eiglmeier K."/>
            <person name="Gas S."/>
            <person name="Barry C.E. III"/>
            <person name="Tekaia F."/>
            <person name="Badcock K."/>
            <person name="Basham D."/>
            <person name="Brown D."/>
            <person name="Chillingworth T."/>
            <person name="Connor R."/>
            <person name="Davies R.M."/>
            <person name="Devlin K."/>
            <person name="Feltwell T."/>
            <person name="Gentles S."/>
            <person name="Hamlin N."/>
            <person name="Holroyd S."/>
            <person name="Hornsby T."/>
            <person name="Jagels K."/>
            <person name="Krogh A."/>
            <person name="McLean J."/>
            <person name="Moule S."/>
            <person name="Murphy L.D."/>
            <person name="Oliver S."/>
            <person name="Osborne J."/>
            <person name="Quail M.A."/>
            <person name="Rajandream M.A."/>
            <person name="Rogers J."/>
            <person name="Rutter S."/>
            <person name="Seeger K."/>
            <person name="Skelton S."/>
            <person name="Squares S."/>
            <person name="Squares R."/>
            <person name="Sulston J.E."/>
            <person name="Taylor K."/>
            <person name="Whitehead S."/>
            <person name="Barrell B.G."/>
        </authorList>
    </citation>
    <scope>NUCLEOTIDE SEQUENCE [LARGE SCALE GENOMIC DNA]</scope>
    <source>
        <strain>ATCC 25618 / H37Rv</strain>
    </source>
</reference>
<reference key="4">
    <citation type="journal article" date="2005" name="Biochem. Biophys. Res. Commun.">
        <title>Conserved autophosphorylation pattern in activation loops and juxtamembrane regions of Mycobacterium tuberculosis Ser/Thr protein kinases.</title>
        <authorList>
            <person name="Duran R."/>
            <person name="Villarino A."/>
            <person name="Bellinzoni M."/>
            <person name="Wehenkel A."/>
            <person name="Fernandez P."/>
            <person name="Boitel B."/>
            <person name="Cole S.T."/>
            <person name="Alzari P.M."/>
            <person name="Cervenansky C."/>
        </authorList>
    </citation>
    <scope>PHOSPHORYLATION AT THR-135; THR-169; THR-171; THR-173 AND THR-209</scope>
    <scope>IDENTIFICATION BY MASS SPECTROMETRY</scope>
</reference>
<reference key="5">
    <citation type="journal article" date="2005" name="Protein Sci.">
        <title>Mycobacterium tuberculosis serine/threonine kinases PknB, PknD, PknE, and PknF phosphorylate multiple FHA domains.</title>
        <authorList>
            <person name="Grundner C."/>
            <person name="Gay L.M."/>
            <person name="Alber T."/>
        </authorList>
    </citation>
    <scope>FUNCTION</scope>
</reference>
<reference key="6">
    <citation type="journal article" date="2006" name="Proteomics">
        <title>Characterization of the phosphorylation sites of Mycobacterium tuberculosis serine/threonine protein kinases, PknA, PknD, PknE, and PknH by mass spectrometry.</title>
        <authorList>
            <person name="Molle V."/>
            <person name="Zanella-Cleon I."/>
            <person name="Robin J.P."/>
            <person name="Mallejac S."/>
            <person name="Cozzone A.J."/>
            <person name="Becchi M."/>
        </authorList>
    </citation>
    <scope>AUTOPHOSPHORYLATION</scope>
    <scope>IDENTIFICATION BY MASS SPECTROMETRY</scope>
    <source>
        <strain>ATCC 25618 / H37Rv</strain>
    </source>
</reference>
<reference key="7">
    <citation type="journal article" date="2007" name="J. Biol. Chem.">
        <title>Allosteric activation by dimerization of the PknD receptor Ser/Thr protein kinase from Mycobacterium tuberculosis.</title>
        <authorList>
            <person name="Greenstein A.E."/>
            <person name="Echols N."/>
            <person name="Lombana T.N."/>
            <person name="King D.S."/>
            <person name="Alber T."/>
        </authorList>
    </citation>
    <scope>FUNCTION</scope>
    <scope>CATALYTIC ACTIVITY</scope>
    <scope>ACTIVITY REGULATION</scope>
    <scope>SUBUNIT</scope>
    <scope>MUTAGENESIS OF HIS-79 AND TYR-81</scope>
</reference>
<reference key="8">
    <citation type="journal article" date="2007" name="PLoS Pathog.">
        <title>M. tuberculosis Ser/Thr protein kinase D phosphorylates an anti-anti-sigma factor homolog.</title>
        <authorList>
            <person name="Greenstein A.E."/>
            <person name="MacGurn J.A."/>
            <person name="Baer C.E."/>
            <person name="Falick A.M."/>
            <person name="Cox J.S."/>
            <person name="Alber T."/>
        </authorList>
    </citation>
    <scope>FUNCTION</scope>
    <scope>CATALYTIC ACTIVITY</scope>
    <scope>MUTAGENESIS OF ASP-138</scope>
</reference>
<reference key="9">
    <citation type="journal article" date="2010" name="Tuberculosis">
        <title>Effect of PstS sub-units or PknD deficiency on the survival of Mycobacterium tuberculosis.</title>
        <authorList>
            <person name="Vanzembergh F."/>
            <person name="Peirs P."/>
            <person name="Lefevre P."/>
            <person name="Celio N."/>
            <person name="Mathys V."/>
            <person name="Content J."/>
            <person name="Kalai M."/>
        </authorList>
    </citation>
    <scope>INDUCTION</scope>
    <scope>DISRUPTION PHENOTYPE</scope>
    <source>
        <strain>H37Rv</strain>
    </source>
</reference>
<reference key="10">
    <citation type="journal article" date="2011" name="Mol. Cell. Proteomics">
        <title>Proteogenomic analysis of Mycobacterium tuberculosis by high resolution mass spectrometry.</title>
        <authorList>
            <person name="Kelkar D.S."/>
            <person name="Kumar D."/>
            <person name="Kumar P."/>
            <person name="Balakrishnan L."/>
            <person name="Muthusamy B."/>
            <person name="Yadav A.K."/>
            <person name="Shrivastava P."/>
            <person name="Marimuthu A."/>
            <person name="Anand S."/>
            <person name="Sundaram H."/>
            <person name="Kingsbury R."/>
            <person name="Harsha H.C."/>
            <person name="Nair B."/>
            <person name="Prasad T.S."/>
            <person name="Chauhan D.S."/>
            <person name="Katoch K."/>
            <person name="Katoch V.M."/>
            <person name="Kumar P."/>
            <person name="Chaerkady R."/>
            <person name="Ramachandran S."/>
            <person name="Dash D."/>
            <person name="Pandey A."/>
        </authorList>
    </citation>
    <scope>ACETYLATION [LARGE SCALE ANALYSIS] AT SER-2</scope>
    <scope>CLEAVAGE OF INITIATOR METHIONINE [LARGE SCALE ANALYSIS]</scope>
    <scope>IDENTIFICATION BY MASS SPECTROMETRY [LARGE SCALE ANALYSIS]</scope>
    <source>
        <strain>ATCC 25618 / H37Rv</strain>
    </source>
</reference>
<reference key="11">
    <citation type="journal article" date="2013" name="Proc. Natl. Acad. Sci. U.S.A.">
        <title>Osmosensory signaling in Mycobacterium tuberculosis mediated by a eukaryotic-like Ser/Thr protein kinase.</title>
        <authorList>
            <person name="Hatzios S.K."/>
            <person name="Baer C.E."/>
            <person name="Rustad T.R."/>
            <person name="Siegrist M.S."/>
            <person name="Pang J.M."/>
            <person name="Ortega C."/>
            <person name="Alber T."/>
            <person name="Grundner C."/>
            <person name="Sherman D.R."/>
            <person name="Bertozzi C.R."/>
        </authorList>
    </citation>
    <scope>FUNCTION</scope>
    <scope>CATALYTIC ACTIVITY</scope>
</reference>
<reference key="12">
    <citation type="journal article" date="2019" name="J. Bacteriol.">
        <title>Tuning the Mycobacterium tuberculosis alternative sigma factor SigF through the multidomain regulator Rv1364c and osmosensory kinase protein kinase D.</title>
        <authorList>
            <person name="Misra R."/>
            <person name="Menon D."/>
            <person name="Arora G."/>
            <person name="Virmani R."/>
            <person name="Gaur M."/>
            <person name="Naz S."/>
            <person name="Jaisinghani N."/>
            <person name="Bhaduri A."/>
            <person name="Bothra A."/>
            <person name="Maji A."/>
            <person name="Singhal A."/>
            <person name="Karwal P."/>
            <person name="Hentschker C."/>
            <person name="Becher D."/>
            <person name="Rao V."/>
            <person name="Nandicoori V.K."/>
            <person name="Gandotra S."/>
            <person name="Singh Y."/>
        </authorList>
    </citation>
    <scope>FUNCTION</scope>
    <scope>CATALYTIC ACTIVITY</scope>
</reference>
<reference evidence="15 16" key="13">
    <citation type="journal article" date="2004" name="J. Mol. Biol.">
        <title>Sensor domain of the Mycobacterium tuberculosis receptor Ser/Thr protein kinase, PknD, forms a highly symmetric beta propeller.</title>
        <authorList>
            <person name="Good M.C."/>
            <person name="Greenstein A.E."/>
            <person name="Young T.A."/>
            <person name="Ng H.L."/>
            <person name="Alber T."/>
        </authorList>
    </citation>
    <scope>X-RAY CRYSTALLOGRAPHY (1.80 ANGSTROMS) OF 403-664</scope>
</reference>
<organism>
    <name type="scientific">Mycobacterium tuberculosis (strain ATCC 25618 / H37Rv)</name>
    <dbReference type="NCBI Taxonomy" id="83332"/>
    <lineage>
        <taxon>Bacteria</taxon>
        <taxon>Bacillati</taxon>
        <taxon>Actinomycetota</taxon>
        <taxon>Actinomycetes</taxon>
        <taxon>Mycobacteriales</taxon>
        <taxon>Mycobacteriaceae</taxon>
        <taxon>Mycobacterium</taxon>
        <taxon>Mycobacterium tuberculosis complex</taxon>
    </lineage>
</organism>
<protein>
    <recommendedName>
        <fullName>Serine/threonine-protein kinase PknD</fullName>
        <ecNumber evidence="9 10 12 13">2.7.11.1</ecNumber>
    </recommendedName>
</protein>
<keyword id="KW-0002">3D-structure</keyword>
<keyword id="KW-0007">Acetylation</keyword>
<keyword id="KW-0067">ATP-binding</keyword>
<keyword id="KW-1003">Cell membrane</keyword>
<keyword id="KW-0418">Kinase</keyword>
<keyword id="KW-0472">Membrane</keyword>
<keyword id="KW-0547">Nucleotide-binding</keyword>
<keyword id="KW-0597">Phosphoprotein</keyword>
<keyword id="KW-1185">Reference proteome</keyword>
<keyword id="KW-0677">Repeat</keyword>
<keyword id="KW-0723">Serine/threonine-protein kinase</keyword>
<keyword id="KW-0808">Transferase</keyword>
<keyword id="KW-0812">Transmembrane</keyword>
<keyword id="KW-1133">Transmembrane helix</keyword>
<keyword id="KW-0843">Virulence</keyword>